<keyword id="KW-0963">Cytoplasm</keyword>
<keyword id="KW-0489">Methyltransferase</keyword>
<keyword id="KW-1185">Reference proteome</keyword>
<keyword id="KW-0698">rRNA processing</keyword>
<keyword id="KW-0949">S-adenosyl-L-methionine</keyword>
<keyword id="KW-0808">Transferase</keyword>
<dbReference type="EC" id="2.1.1.242" evidence="1"/>
<dbReference type="EMBL" id="CP000851">
    <property type="protein sequence ID" value="ABV89357.1"/>
    <property type="molecule type" value="Genomic_DNA"/>
</dbReference>
<dbReference type="SMR" id="A8H9X0"/>
<dbReference type="STRING" id="398579.Spea_4047"/>
<dbReference type="KEGG" id="spl:Spea_4047"/>
<dbReference type="eggNOG" id="COG0742">
    <property type="taxonomic scope" value="Bacteria"/>
</dbReference>
<dbReference type="HOGENOM" id="CLU_076324_0_0_6"/>
<dbReference type="OrthoDB" id="3191794at2"/>
<dbReference type="Proteomes" id="UP000002608">
    <property type="component" value="Chromosome"/>
</dbReference>
<dbReference type="GO" id="GO:0005737">
    <property type="term" value="C:cytoplasm"/>
    <property type="evidence" value="ECO:0007669"/>
    <property type="project" value="UniProtKB-SubCell"/>
</dbReference>
<dbReference type="GO" id="GO:0008990">
    <property type="term" value="F:rRNA (guanine-N2-)-methyltransferase activity"/>
    <property type="evidence" value="ECO:0007669"/>
    <property type="project" value="UniProtKB-UniRule"/>
</dbReference>
<dbReference type="Gene3D" id="3.40.50.150">
    <property type="entry name" value="Vaccinia Virus protein VP39"/>
    <property type="match status" value="1"/>
</dbReference>
<dbReference type="Gene3D" id="3.40.1630.10">
    <property type="entry name" value="YhiQ-like domain"/>
    <property type="match status" value="1"/>
</dbReference>
<dbReference type="HAMAP" id="MF_01523">
    <property type="entry name" value="16SrRNA_methyltr_J"/>
    <property type="match status" value="1"/>
</dbReference>
<dbReference type="InterPro" id="IPR007536">
    <property type="entry name" value="16SrRNA_methylTrfase_J"/>
</dbReference>
<dbReference type="InterPro" id="IPR029063">
    <property type="entry name" value="SAM-dependent_MTases_sf"/>
</dbReference>
<dbReference type="PANTHER" id="PTHR36112">
    <property type="entry name" value="RIBOSOMAL RNA SMALL SUBUNIT METHYLTRANSFERASE J"/>
    <property type="match status" value="1"/>
</dbReference>
<dbReference type="PANTHER" id="PTHR36112:SF1">
    <property type="entry name" value="RIBOSOMAL RNA SMALL SUBUNIT METHYLTRANSFERASE J"/>
    <property type="match status" value="1"/>
</dbReference>
<dbReference type="Pfam" id="PF04445">
    <property type="entry name" value="SAM_MT"/>
    <property type="match status" value="1"/>
</dbReference>
<dbReference type="SUPFAM" id="SSF53335">
    <property type="entry name" value="S-adenosyl-L-methionine-dependent methyltransferases"/>
    <property type="match status" value="1"/>
</dbReference>
<reference key="1">
    <citation type="submission" date="2007-10" db="EMBL/GenBank/DDBJ databases">
        <title>Complete sequence of Shewanella pealeana ATCC 700345.</title>
        <authorList>
            <consortium name="US DOE Joint Genome Institute"/>
            <person name="Copeland A."/>
            <person name="Lucas S."/>
            <person name="Lapidus A."/>
            <person name="Barry K."/>
            <person name="Glavina del Rio T."/>
            <person name="Dalin E."/>
            <person name="Tice H."/>
            <person name="Pitluck S."/>
            <person name="Chertkov O."/>
            <person name="Brettin T."/>
            <person name="Bruce D."/>
            <person name="Detter J.C."/>
            <person name="Han C."/>
            <person name="Schmutz J."/>
            <person name="Larimer F."/>
            <person name="Land M."/>
            <person name="Hauser L."/>
            <person name="Kyrpides N."/>
            <person name="Kim E."/>
            <person name="Zhao J.-S.Z."/>
            <person name="Manno D."/>
            <person name="Hawari J."/>
            <person name="Richardson P."/>
        </authorList>
    </citation>
    <scope>NUCLEOTIDE SEQUENCE [LARGE SCALE GENOMIC DNA]</scope>
    <source>
        <strain>ATCC 700345 / ANG-SQ1</strain>
    </source>
</reference>
<gene>
    <name evidence="1" type="primary">rsmJ</name>
    <name type="ordered locus">Spea_4047</name>
</gene>
<evidence type="ECO:0000255" key="1">
    <source>
        <dbReference type="HAMAP-Rule" id="MF_01523"/>
    </source>
</evidence>
<proteinExistence type="inferred from homology"/>
<comment type="function">
    <text evidence="1">Specifically methylates the guanosine in position 1516 of 16S rRNA.</text>
</comment>
<comment type="catalytic activity">
    <reaction evidence="1">
        <text>guanosine(1516) in 16S rRNA + S-adenosyl-L-methionine = N(2)-methylguanosine(1516) in 16S rRNA + S-adenosyl-L-homocysteine + H(+)</text>
        <dbReference type="Rhea" id="RHEA:43220"/>
        <dbReference type="Rhea" id="RHEA-COMP:10412"/>
        <dbReference type="Rhea" id="RHEA-COMP:10413"/>
        <dbReference type="ChEBI" id="CHEBI:15378"/>
        <dbReference type="ChEBI" id="CHEBI:57856"/>
        <dbReference type="ChEBI" id="CHEBI:59789"/>
        <dbReference type="ChEBI" id="CHEBI:74269"/>
        <dbReference type="ChEBI" id="CHEBI:74481"/>
        <dbReference type="EC" id="2.1.1.242"/>
    </reaction>
</comment>
<comment type="subcellular location">
    <subcellularLocation>
        <location evidence="1">Cytoplasm</location>
    </subcellularLocation>
</comment>
<comment type="similarity">
    <text evidence="1">Belongs to the methyltransferase superfamily. RsmJ family.</text>
</comment>
<name>RSMJ_SHEPA</name>
<feature type="chain" id="PRO_0000383388" description="Ribosomal RNA small subunit methyltransferase J">
    <location>
        <begin position="1"/>
        <end position="253"/>
    </location>
</feature>
<feature type="binding site" evidence="1">
    <location>
        <begin position="98"/>
        <end position="99"/>
    </location>
    <ligand>
        <name>S-adenosyl-L-methionine</name>
        <dbReference type="ChEBI" id="CHEBI:59789"/>
    </ligand>
</feature>
<feature type="binding site" evidence="1">
    <location>
        <begin position="114"/>
        <end position="115"/>
    </location>
    <ligand>
        <name>S-adenosyl-L-methionine</name>
        <dbReference type="ChEBI" id="CHEBI:59789"/>
    </ligand>
</feature>
<feature type="binding site" evidence="1">
    <location>
        <begin position="150"/>
        <end position="151"/>
    </location>
    <ligand>
        <name>S-adenosyl-L-methionine</name>
        <dbReference type="ChEBI" id="CHEBI:59789"/>
    </ligand>
</feature>
<feature type="binding site" evidence="1">
    <location>
        <position position="172"/>
    </location>
    <ligand>
        <name>S-adenosyl-L-methionine</name>
        <dbReference type="ChEBI" id="CHEBI:59789"/>
    </ligand>
</feature>
<sequence length="253" mass="27693">MTSIFFNRHYPTIESACERWGLVYDPDAEFELVFEDNILTLIKRDEPKLKGISVDFVSGAVAHRRKFGGGRGQSIAKAVGLKQGVMPTVVDGTAGLGRDAFVLASLGCKVLMVERHPIVAALLEDGLRRAYEDAEIGGWMQQRMSLFHGSSIDSLADAAKASNTEVDVVYLDPMYPHREKSALVKKEMRVFQSLVGADLDADGLLAPAMALATKRVVVKRPDYADDLDGVKPSMVIATKKNRFDVYVKAAMTA</sequence>
<accession>A8H9X0</accession>
<protein>
    <recommendedName>
        <fullName evidence="1">Ribosomal RNA small subunit methyltransferase J</fullName>
        <ecNumber evidence="1">2.1.1.242</ecNumber>
    </recommendedName>
    <alternativeName>
        <fullName evidence="1">16S rRNA m2G1516 methyltransferase</fullName>
    </alternativeName>
    <alternativeName>
        <fullName evidence="1">rRNA (guanine-N(2)-)-methyltransferase</fullName>
    </alternativeName>
</protein>
<organism>
    <name type="scientific">Shewanella pealeana (strain ATCC 700345 / ANG-SQ1)</name>
    <dbReference type="NCBI Taxonomy" id="398579"/>
    <lineage>
        <taxon>Bacteria</taxon>
        <taxon>Pseudomonadati</taxon>
        <taxon>Pseudomonadota</taxon>
        <taxon>Gammaproteobacteria</taxon>
        <taxon>Alteromonadales</taxon>
        <taxon>Shewanellaceae</taxon>
        <taxon>Shewanella</taxon>
    </lineage>
</organism>